<feature type="signal peptide" evidence="1">
    <location>
        <begin position="1"/>
        <end position="23"/>
    </location>
</feature>
<feature type="chain" id="PRO_5011950699" description="Receptor-like protein 13">
    <location>
        <begin position="24"/>
        <end position="1068"/>
    </location>
</feature>
<feature type="topological domain" description="Extracellular" evidence="1">
    <location>
        <begin position="24"/>
        <end position="986"/>
    </location>
</feature>
<feature type="transmembrane region" description="Helical" evidence="1">
    <location>
        <begin position="987"/>
        <end position="1007"/>
    </location>
</feature>
<feature type="topological domain" description="Cytoplasmic" evidence="1">
    <location>
        <begin position="1008"/>
        <end position="1068"/>
    </location>
</feature>
<feature type="repeat" description="LRR 1" evidence="1">
    <location>
        <begin position="104"/>
        <end position="129"/>
    </location>
</feature>
<feature type="repeat" description="LRR 2" evidence="1">
    <location>
        <begin position="139"/>
        <end position="162"/>
    </location>
</feature>
<feature type="repeat" description="LRR 3" evidence="1">
    <location>
        <begin position="164"/>
        <end position="187"/>
    </location>
</feature>
<feature type="repeat" description="LRR 4" evidence="1">
    <location>
        <begin position="188"/>
        <end position="212"/>
    </location>
</feature>
<feature type="repeat" description="LRR 5" evidence="1">
    <location>
        <begin position="216"/>
        <end position="239"/>
    </location>
</feature>
<feature type="repeat" description="LRR 6" evidence="1">
    <location>
        <begin position="241"/>
        <end position="264"/>
    </location>
</feature>
<feature type="repeat" description="LRR 7" evidence="1">
    <location>
        <begin position="265"/>
        <end position="290"/>
    </location>
</feature>
<feature type="repeat" description="LRR 8" evidence="1">
    <location>
        <begin position="292"/>
        <end position="315"/>
    </location>
</feature>
<feature type="repeat" description="LRR 9" evidence="1">
    <location>
        <begin position="325"/>
        <end position="349"/>
    </location>
</feature>
<feature type="repeat" description="LRR 10" evidence="1">
    <location>
        <begin position="350"/>
        <end position="373"/>
    </location>
</feature>
<feature type="repeat" description="LRR 11" evidence="1">
    <location>
        <begin position="375"/>
        <end position="397"/>
    </location>
</feature>
<feature type="repeat" description="LRR 12" evidence="1">
    <location>
        <begin position="398"/>
        <end position="423"/>
    </location>
</feature>
<feature type="repeat" description="LRR 13" evidence="1">
    <location>
        <begin position="424"/>
        <end position="447"/>
    </location>
</feature>
<feature type="repeat" description="LRR 14" evidence="1">
    <location>
        <begin position="448"/>
        <end position="471"/>
    </location>
</feature>
<feature type="repeat" description="LRR 15" evidence="1">
    <location>
        <begin position="472"/>
        <end position="497"/>
    </location>
</feature>
<feature type="repeat" description="LRR 16" evidence="1">
    <location>
        <begin position="499"/>
        <end position="517"/>
    </location>
</feature>
<feature type="repeat" description="LRR 17" evidence="1">
    <location>
        <begin position="519"/>
        <end position="543"/>
    </location>
</feature>
<feature type="repeat" description="LRR 18" evidence="1">
    <location>
        <begin position="544"/>
        <end position="567"/>
    </location>
</feature>
<feature type="repeat" description="LRR 19" evidence="1">
    <location>
        <begin position="569"/>
        <end position="594"/>
    </location>
</feature>
<feature type="repeat" description="LRR 20; degenerate" evidence="4">
    <location>
        <begin position="596"/>
        <end position="615"/>
    </location>
</feature>
<feature type="repeat" description="LRR 21" evidence="1">
    <location>
        <begin position="616"/>
        <end position="639"/>
    </location>
</feature>
<feature type="repeat" description="LRR 22" evidence="1">
    <location>
        <begin position="641"/>
        <end position="664"/>
    </location>
</feature>
<feature type="repeat" description="LRR 23" evidence="1">
    <location>
        <begin position="665"/>
        <end position="688"/>
    </location>
</feature>
<feature type="repeat" description="LRR 24" evidence="1">
    <location>
        <begin position="690"/>
        <end position="710"/>
    </location>
</feature>
<feature type="repeat" description="LRR 25" evidence="1">
    <location>
        <begin position="711"/>
        <end position="734"/>
    </location>
</feature>
<feature type="repeat" description="LRR 26" evidence="1">
    <location>
        <begin position="736"/>
        <end position="757"/>
    </location>
</feature>
<feature type="repeat" description="LRR 27" evidence="1">
    <location>
        <begin position="758"/>
        <end position="781"/>
    </location>
</feature>
<feature type="repeat" description="LRR 28" evidence="1">
    <location>
        <begin position="846"/>
        <end position="870"/>
    </location>
</feature>
<feature type="repeat" description="LRR 29" evidence="1">
    <location>
        <begin position="871"/>
        <end position="893"/>
    </location>
</feature>
<feature type="repeat" description="LRR 30" evidence="1">
    <location>
        <begin position="895"/>
        <end position="918"/>
    </location>
</feature>
<feature type="repeat" description="LRR 31" evidence="1">
    <location>
        <begin position="920"/>
        <end position="943"/>
    </location>
</feature>
<feature type="glycosylation site" description="N-linked (GlcNAc...) asparagine" evidence="2">
    <location>
        <position position="59"/>
    </location>
</feature>
<feature type="glycosylation site" description="N-linked (GlcNAc...) asparagine" evidence="2">
    <location>
        <position position="97"/>
    </location>
</feature>
<feature type="glycosylation site" description="N-linked (GlcNAc...) asparagine" evidence="2">
    <location>
        <position position="153"/>
    </location>
</feature>
<feature type="glycosylation site" description="N-linked (GlcNAc...) asparagine" evidence="2">
    <location>
        <position position="202"/>
    </location>
</feature>
<feature type="glycosylation site" description="N-linked (GlcNAc...) asparagine" evidence="2">
    <location>
        <position position="279"/>
    </location>
</feature>
<feature type="glycosylation site" description="N-linked (GlcNAc...) asparagine" evidence="2">
    <location>
        <position position="397"/>
    </location>
</feature>
<feature type="glycosylation site" description="N-linked (GlcNAc...) asparagine" evidence="2">
    <location>
        <position position="471"/>
    </location>
</feature>
<feature type="glycosylation site" description="N-linked (GlcNAc...) asparagine" evidence="2">
    <location>
        <position position="482"/>
    </location>
</feature>
<feature type="glycosylation site" description="N-linked (GlcNAc...) asparagine" evidence="2">
    <location>
        <position position="501"/>
    </location>
</feature>
<feature type="glycosylation site" description="N-linked (GlcNAc...) asparagine" evidence="2">
    <location>
        <position position="570"/>
    </location>
</feature>
<feature type="glycosylation site" description="N-linked (GlcNAc...) asparagine" evidence="2">
    <location>
        <position position="591"/>
    </location>
</feature>
<feature type="glycosylation site" description="N-linked (GlcNAc...) asparagine" evidence="2">
    <location>
        <position position="663"/>
    </location>
</feature>
<feature type="glycosylation site" description="N-linked (GlcNAc...) asparagine" evidence="2">
    <location>
        <position position="700"/>
    </location>
</feature>
<feature type="glycosylation site" description="N-linked (GlcNAc...) asparagine" evidence="2">
    <location>
        <position position="735"/>
    </location>
</feature>
<feature type="glycosylation site" description="N-linked (GlcNAc...) asparagine" evidence="2">
    <location>
        <position position="745"/>
    </location>
</feature>
<feature type="glycosylation site" description="N-linked (GlcNAc...) asparagine" evidence="2">
    <location>
        <position position="771"/>
    </location>
</feature>
<feature type="glycosylation site" description="N-linked (GlcNAc...) asparagine" evidence="2">
    <location>
        <position position="780"/>
    </location>
</feature>
<feature type="glycosylation site" description="N-linked (GlcNAc...) asparagine" evidence="2">
    <location>
        <position position="822"/>
    </location>
</feature>
<feature type="glycosylation site" description="N-linked (GlcNAc...) asparagine" evidence="2">
    <location>
        <position position="877"/>
    </location>
</feature>
<feature type="glycosylation site" description="N-linked (GlcNAc...) asparagine" evidence="2">
    <location>
        <position position="882"/>
    </location>
</feature>
<feature type="glycosylation site" description="N-linked (GlcNAc...) asparagine" evidence="2">
    <location>
        <position position="925"/>
    </location>
</feature>
<feature type="glycosylation site" description="N-linked (GlcNAc...) asparagine" evidence="2">
    <location>
        <position position="930"/>
    </location>
</feature>
<gene>
    <name evidence="3" type="primary">RLP13</name>
    <name evidence="5" type="ordered locus">At1g74170</name>
    <name evidence="6" type="ORF">F9E11.7</name>
</gene>
<name>RLP13_ARATH</name>
<proteinExistence type="inferred from homology"/>
<accession>Q9C6A6</accession>
<comment type="subcellular location">
    <subcellularLocation>
        <location evidence="4">Cell membrane</location>
        <topology evidence="4">Single-pass type I membrane protein</topology>
    </subcellularLocation>
</comment>
<comment type="similarity">
    <text evidence="4">Belongs to the RLP family.</text>
</comment>
<evidence type="ECO:0000255" key="1"/>
<evidence type="ECO:0000255" key="2">
    <source>
        <dbReference type="PROSITE-ProRule" id="PRU00498"/>
    </source>
</evidence>
<evidence type="ECO:0000303" key="3">
    <source>
    </source>
</evidence>
<evidence type="ECO:0000305" key="4"/>
<evidence type="ECO:0000312" key="5">
    <source>
        <dbReference type="Araport" id="AT1G74170"/>
    </source>
</evidence>
<evidence type="ECO:0000312" key="6">
    <source>
        <dbReference type="EMBL" id="AAG51873.1"/>
    </source>
</evidence>
<reference key="1">
    <citation type="journal article" date="2000" name="Nature">
        <title>Sequence and analysis of chromosome 1 of the plant Arabidopsis thaliana.</title>
        <authorList>
            <person name="Theologis A."/>
            <person name="Ecker J.R."/>
            <person name="Palm C.J."/>
            <person name="Federspiel N.A."/>
            <person name="Kaul S."/>
            <person name="White O."/>
            <person name="Alonso J."/>
            <person name="Altafi H."/>
            <person name="Araujo R."/>
            <person name="Bowman C.L."/>
            <person name="Brooks S.Y."/>
            <person name="Buehler E."/>
            <person name="Chan A."/>
            <person name="Chao Q."/>
            <person name="Chen H."/>
            <person name="Cheuk R.F."/>
            <person name="Chin C.W."/>
            <person name="Chung M.K."/>
            <person name="Conn L."/>
            <person name="Conway A.B."/>
            <person name="Conway A.R."/>
            <person name="Creasy T.H."/>
            <person name="Dewar K."/>
            <person name="Dunn P."/>
            <person name="Etgu P."/>
            <person name="Feldblyum T.V."/>
            <person name="Feng J.-D."/>
            <person name="Fong B."/>
            <person name="Fujii C.Y."/>
            <person name="Gill J.E."/>
            <person name="Goldsmith A.D."/>
            <person name="Haas B."/>
            <person name="Hansen N.F."/>
            <person name="Hughes B."/>
            <person name="Huizar L."/>
            <person name="Hunter J.L."/>
            <person name="Jenkins J."/>
            <person name="Johnson-Hopson C."/>
            <person name="Khan S."/>
            <person name="Khaykin E."/>
            <person name="Kim C.J."/>
            <person name="Koo H.L."/>
            <person name="Kremenetskaia I."/>
            <person name="Kurtz D.B."/>
            <person name="Kwan A."/>
            <person name="Lam B."/>
            <person name="Langin-Hooper S."/>
            <person name="Lee A."/>
            <person name="Lee J.M."/>
            <person name="Lenz C.A."/>
            <person name="Li J.H."/>
            <person name="Li Y.-P."/>
            <person name="Lin X."/>
            <person name="Liu S.X."/>
            <person name="Liu Z.A."/>
            <person name="Luros J.S."/>
            <person name="Maiti R."/>
            <person name="Marziali A."/>
            <person name="Militscher J."/>
            <person name="Miranda M."/>
            <person name="Nguyen M."/>
            <person name="Nierman W.C."/>
            <person name="Osborne B.I."/>
            <person name="Pai G."/>
            <person name="Peterson J."/>
            <person name="Pham P.K."/>
            <person name="Rizzo M."/>
            <person name="Rooney T."/>
            <person name="Rowley D."/>
            <person name="Sakano H."/>
            <person name="Salzberg S.L."/>
            <person name="Schwartz J.R."/>
            <person name="Shinn P."/>
            <person name="Southwick A.M."/>
            <person name="Sun H."/>
            <person name="Tallon L.J."/>
            <person name="Tambunga G."/>
            <person name="Toriumi M.J."/>
            <person name="Town C.D."/>
            <person name="Utterback T."/>
            <person name="Van Aken S."/>
            <person name="Vaysberg M."/>
            <person name="Vysotskaia V.S."/>
            <person name="Walker M."/>
            <person name="Wu D."/>
            <person name="Yu G."/>
            <person name="Fraser C.M."/>
            <person name="Venter J.C."/>
            <person name="Davis R.W."/>
        </authorList>
    </citation>
    <scope>NUCLEOTIDE SEQUENCE [LARGE SCALE GENOMIC DNA]</scope>
    <source>
        <strain>cv. Columbia</strain>
    </source>
</reference>
<reference key="2">
    <citation type="journal article" date="2017" name="Plant J.">
        <title>Araport11: a complete reannotation of the Arabidopsis thaliana reference genome.</title>
        <authorList>
            <person name="Cheng C.Y."/>
            <person name="Krishnakumar V."/>
            <person name="Chan A.P."/>
            <person name="Thibaud-Nissen F."/>
            <person name="Schobel S."/>
            <person name="Town C.D."/>
        </authorList>
    </citation>
    <scope>GENOME REANNOTATION</scope>
    <source>
        <strain>cv. Columbia</strain>
    </source>
</reference>
<reference key="3">
    <citation type="journal article" date="2005" name="Plant Physiol.">
        <title>Phylogenomic analysis of the receptor-like proteins of rice and Arabidopsis.</title>
        <authorList>
            <person name="Fritz-Laylin L.K."/>
            <person name="Krishnamurthy N."/>
            <person name="Toer M."/>
            <person name="Sjoelander K.V."/>
            <person name="Jones J.D."/>
        </authorList>
    </citation>
    <scope>GENE FAMILY</scope>
</reference>
<reference key="4">
    <citation type="journal article" date="2008" name="Plant Physiol.">
        <title>A genome-wide functional investigation into the roles of receptor-like proteins in Arabidopsis.</title>
        <authorList>
            <person name="Wang G."/>
            <person name="Ellendorff U."/>
            <person name="Kemp B."/>
            <person name="Mansfield J.W."/>
            <person name="Forsyth A."/>
            <person name="Mitchell K."/>
            <person name="Bastas K."/>
            <person name="Liu C.-M."/>
            <person name="Woods-Toer A."/>
            <person name="Zipfel C."/>
            <person name="de Wit P.J.G.M."/>
            <person name="Jones J.D.G."/>
            <person name="Toer M."/>
            <person name="Thomma B.P.H.J."/>
        </authorList>
    </citation>
    <scope>GENE FAMILY</scope>
    <scope>NOMENCLATURE</scope>
</reference>
<dbReference type="EMBL" id="AC079678">
    <property type="protein sequence ID" value="AAG51873.1"/>
    <property type="molecule type" value="Genomic_DNA"/>
</dbReference>
<dbReference type="EMBL" id="CP002684">
    <property type="protein sequence ID" value="ANM60125.1"/>
    <property type="molecule type" value="Genomic_DNA"/>
</dbReference>
<dbReference type="PIR" id="H96769">
    <property type="entry name" value="H96769"/>
</dbReference>
<dbReference type="RefSeq" id="NP_001322432.1">
    <property type="nucleotide sequence ID" value="NM_001334634.1"/>
</dbReference>
<dbReference type="SMR" id="Q9C6A6"/>
<dbReference type="FunCoup" id="Q9C6A6">
    <property type="interactions" value="313"/>
</dbReference>
<dbReference type="STRING" id="3702.Q9C6A6"/>
<dbReference type="GlyCosmos" id="Q9C6A6">
    <property type="glycosylation" value="22 sites, No reported glycans"/>
</dbReference>
<dbReference type="GlyGen" id="Q9C6A6">
    <property type="glycosylation" value="22 sites"/>
</dbReference>
<dbReference type="PaxDb" id="3702-AT1G74170.1"/>
<dbReference type="EnsemblPlants" id="AT1G74170.2">
    <property type="protein sequence ID" value="AT1G74170.2"/>
    <property type="gene ID" value="AT1G74170"/>
</dbReference>
<dbReference type="GeneID" id="843757"/>
<dbReference type="Gramene" id="AT1G74170.2">
    <property type="protein sequence ID" value="AT1G74170.2"/>
    <property type="gene ID" value="AT1G74170"/>
</dbReference>
<dbReference type="KEGG" id="ath:AT1G74170"/>
<dbReference type="Araport" id="AT1G74170"/>
<dbReference type="TAIR" id="AT1G74170">
    <property type="gene designation" value="RLP13"/>
</dbReference>
<dbReference type="InParanoid" id="Q9C6A6"/>
<dbReference type="PhylomeDB" id="Q9C6A6"/>
<dbReference type="PRO" id="PR:Q9C6A6"/>
<dbReference type="Proteomes" id="UP000006548">
    <property type="component" value="Chromosome 1"/>
</dbReference>
<dbReference type="ExpressionAtlas" id="Q9C6A6">
    <property type="expression patterns" value="baseline and differential"/>
</dbReference>
<dbReference type="GO" id="GO:0005886">
    <property type="term" value="C:plasma membrane"/>
    <property type="evidence" value="ECO:0007669"/>
    <property type="project" value="UniProtKB-SubCell"/>
</dbReference>
<dbReference type="FunFam" id="3.80.10.10:FF:000111">
    <property type="entry name" value="LRR receptor-like serine/threonine-protein kinase ERECTA"/>
    <property type="match status" value="1"/>
</dbReference>
<dbReference type="FunFam" id="3.80.10.10:FF:000095">
    <property type="entry name" value="LRR receptor-like serine/threonine-protein kinase GSO1"/>
    <property type="match status" value="1"/>
</dbReference>
<dbReference type="Gene3D" id="3.80.10.10">
    <property type="entry name" value="Ribonuclease Inhibitor"/>
    <property type="match status" value="4"/>
</dbReference>
<dbReference type="InterPro" id="IPR001611">
    <property type="entry name" value="Leu-rich_rpt"/>
</dbReference>
<dbReference type="InterPro" id="IPR003591">
    <property type="entry name" value="Leu-rich_rpt_typical-subtyp"/>
</dbReference>
<dbReference type="InterPro" id="IPR032675">
    <property type="entry name" value="LRR_dom_sf"/>
</dbReference>
<dbReference type="InterPro" id="IPR013210">
    <property type="entry name" value="LRR_N_plant-typ"/>
</dbReference>
<dbReference type="InterPro" id="IPR051502">
    <property type="entry name" value="RLP_Defense_Trigger"/>
</dbReference>
<dbReference type="PANTHER" id="PTHR48062">
    <property type="entry name" value="RECEPTOR-LIKE PROTEIN 14"/>
    <property type="match status" value="1"/>
</dbReference>
<dbReference type="PANTHER" id="PTHR48062:SF7">
    <property type="entry name" value="RECEPTOR-LIKE PROTEIN 15"/>
    <property type="match status" value="1"/>
</dbReference>
<dbReference type="Pfam" id="PF00560">
    <property type="entry name" value="LRR_1"/>
    <property type="match status" value="5"/>
</dbReference>
<dbReference type="Pfam" id="PF13855">
    <property type="entry name" value="LRR_8"/>
    <property type="match status" value="3"/>
</dbReference>
<dbReference type="Pfam" id="PF08263">
    <property type="entry name" value="LRRNT_2"/>
    <property type="match status" value="1"/>
</dbReference>
<dbReference type="PRINTS" id="PR00019">
    <property type="entry name" value="LEURICHRPT"/>
</dbReference>
<dbReference type="SMART" id="SM00365">
    <property type="entry name" value="LRR_SD22"/>
    <property type="match status" value="6"/>
</dbReference>
<dbReference type="SMART" id="SM00369">
    <property type="entry name" value="LRR_TYP"/>
    <property type="match status" value="10"/>
</dbReference>
<dbReference type="SUPFAM" id="SSF52058">
    <property type="entry name" value="L domain-like"/>
    <property type="match status" value="1"/>
</dbReference>
<dbReference type="SUPFAM" id="SSF52047">
    <property type="entry name" value="RNI-like"/>
    <property type="match status" value="2"/>
</dbReference>
<protein>
    <recommendedName>
        <fullName evidence="3">Receptor-like protein 13</fullName>
        <shortName evidence="3">AtRLP13</shortName>
    </recommendedName>
</protein>
<sequence length="1068" mass="119850">MEGKLFLGQYLICVILLLGQLHGYKSCIEKERKALLELKAFLIPLNAGEWNDNVLSWTNDTKSDCCQWMGVECNRKSGRITNIAFGIGFIIENPLLNLSLLHPFEDVRSLDLSSSRSCEDCGFSGLFDDVEGYKSLSRLRNLEILDLSSHRFNNSIFPFLNAATSLTTLFLTYNNMHSPFLVKEFKDLTNLEHLDLRGNRFNGSIPTQDYNSLRRFRKLEILDLSDNLFNSRIFPFLNSATSLKSLSLWGNNMGGPFPAKELRDLTNVELLDLSRNRFNGSIPVRALFALRKLKALDLSDNEFSSSVELQGKFAKTKPLSGTCPWKNMEELKLSNNKLAGQFPLCLTSLTGLRVLDLSSNQLTGNVPSALANLESLEYLSLFGNNFEGFFSLGLLANLSKLKVLRLDSQSNSLEVEFETSWKPKFQLVVIALRSCNLEKVPHFLLHQKDLHHVDLSDNQIHGNFPSWLLENNTKLEVLLLQNNSFTSFQLPKSAHNLLFLNVSVNKFNHLFLQNFGWILPHLVCVNLAYNGFQGNLPSSLDNMKSIEFLDLSHNRFHGKLPRRFLKGCYNLTILKLSHNKLSGEVFPEAANFTRLWVMSMDNNLFTGNIGKGFRSLPSLNVLDISNNKLTGVIPSWIGERQGLFALQLSNNMLEGEIPTSLFNISYLQLLDLSSNRLSGDIPPHVSSIYHGAVLLLQNNNLSGVIPDTLLLNVIVLDLRNNRLSGNLPEFINTQNISILLLRGNNFTGQIPHQFCSLSNIQLLDLSNNKFNGSIPSCLSNTSFGLRKGDDSYRYDVPSRFGTAKDPVYFESLLMIDEFNMVNETNSQTKIEFATKHRYDAYMGGNLKLLFGMDLSENELSGEIPVELGGLVELEALNLSHNNLSGVILESFSGLKNVESLDLSFNRLQGPIPLQLTDMISLAVFNVSYNNLSGIVPQGRQFNTFETQSYFGNPLLCGKSIDISCASNNFHPTDNGVEADESTVDMESFYWSFVAAYVTILLGILASLSFDSPWSRAWFYIVDAFVLKVRNMLWQNTAGTKCSYVLVSLSSPSVVVLLKPPALFHKTRT</sequence>
<organism>
    <name type="scientific">Arabidopsis thaliana</name>
    <name type="common">Mouse-ear cress</name>
    <dbReference type="NCBI Taxonomy" id="3702"/>
    <lineage>
        <taxon>Eukaryota</taxon>
        <taxon>Viridiplantae</taxon>
        <taxon>Streptophyta</taxon>
        <taxon>Embryophyta</taxon>
        <taxon>Tracheophyta</taxon>
        <taxon>Spermatophyta</taxon>
        <taxon>Magnoliopsida</taxon>
        <taxon>eudicotyledons</taxon>
        <taxon>Gunneridae</taxon>
        <taxon>Pentapetalae</taxon>
        <taxon>rosids</taxon>
        <taxon>malvids</taxon>
        <taxon>Brassicales</taxon>
        <taxon>Brassicaceae</taxon>
        <taxon>Camelineae</taxon>
        <taxon>Arabidopsis</taxon>
    </lineage>
</organism>
<keyword id="KW-1003">Cell membrane</keyword>
<keyword id="KW-0325">Glycoprotein</keyword>
<keyword id="KW-0433">Leucine-rich repeat</keyword>
<keyword id="KW-0472">Membrane</keyword>
<keyword id="KW-0675">Receptor</keyword>
<keyword id="KW-1185">Reference proteome</keyword>
<keyword id="KW-0677">Repeat</keyword>
<keyword id="KW-0732">Signal</keyword>
<keyword id="KW-0812">Transmembrane</keyword>
<keyword id="KW-1133">Transmembrane helix</keyword>